<name>PUR5_STRSV</name>
<reference key="1">
    <citation type="journal article" date="2007" name="J. Bacteriol.">
        <title>Genome of the opportunistic pathogen Streptococcus sanguinis.</title>
        <authorList>
            <person name="Xu P."/>
            <person name="Alves J.M."/>
            <person name="Kitten T."/>
            <person name="Brown A."/>
            <person name="Chen Z."/>
            <person name="Ozaki L.S."/>
            <person name="Manque P."/>
            <person name="Ge X."/>
            <person name="Serrano M.G."/>
            <person name="Puiu D."/>
            <person name="Hendricks S."/>
            <person name="Wang Y."/>
            <person name="Chaplin M.D."/>
            <person name="Akan D."/>
            <person name="Paik S."/>
            <person name="Peterson D.L."/>
            <person name="Macrina F.L."/>
            <person name="Buck G.A."/>
        </authorList>
    </citation>
    <scope>NUCLEOTIDE SEQUENCE [LARGE SCALE GENOMIC DNA]</scope>
    <source>
        <strain>SK36</strain>
    </source>
</reference>
<dbReference type="EC" id="6.3.3.1" evidence="1"/>
<dbReference type="EMBL" id="CP000387">
    <property type="protein sequence ID" value="ABN43499.1"/>
    <property type="molecule type" value="Genomic_DNA"/>
</dbReference>
<dbReference type="RefSeq" id="WP_011836288.1">
    <property type="nucleotide sequence ID" value="NC_009009.1"/>
</dbReference>
<dbReference type="RefSeq" id="YP_001034049.1">
    <property type="nucleotide sequence ID" value="NC_009009.1"/>
</dbReference>
<dbReference type="SMR" id="A3CJZ4"/>
<dbReference type="STRING" id="388919.SSA_0032"/>
<dbReference type="KEGG" id="ssa:SSA_0032"/>
<dbReference type="PATRIC" id="fig|388919.9.peg.29"/>
<dbReference type="eggNOG" id="COG0150">
    <property type="taxonomic scope" value="Bacteria"/>
</dbReference>
<dbReference type="HOGENOM" id="CLU_047116_0_0_9"/>
<dbReference type="OrthoDB" id="9802507at2"/>
<dbReference type="UniPathway" id="UPA00074">
    <property type="reaction ID" value="UER00129"/>
</dbReference>
<dbReference type="Proteomes" id="UP000002148">
    <property type="component" value="Chromosome"/>
</dbReference>
<dbReference type="GO" id="GO:0005829">
    <property type="term" value="C:cytosol"/>
    <property type="evidence" value="ECO:0007669"/>
    <property type="project" value="TreeGrafter"/>
</dbReference>
<dbReference type="GO" id="GO:0005524">
    <property type="term" value="F:ATP binding"/>
    <property type="evidence" value="ECO:0007669"/>
    <property type="project" value="UniProtKB-KW"/>
</dbReference>
<dbReference type="GO" id="GO:0004637">
    <property type="term" value="F:phosphoribosylamine-glycine ligase activity"/>
    <property type="evidence" value="ECO:0007669"/>
    <property type="project" value="TreeGrafter"/>
</dbReference>
<dbReference type="GO" id="GO:0004641">
    <property type="term" value="F:phosphoribosylformylglycinamidine cyclo-ligase activity"/>
    <property type="evidence" value="ECO:0007669"/>
    <property type="project" value="UniProtKB-UniRule"/>
</dbReference>
<dbReference type="GO" id="GO:0006189">
    <property type="term" value="P:'de novo' IMP biosynthetic process"/>
    <property type="evidence" value="ECO:0007669"/>
    <property type="project" value="UniProtKB-UniRule"/>
</dbReference>
<dbReference type="GO" id="GO:0046084">
    <property type="term" value="P:adenine biosynthetic process"/>
    <property type="evidence" value="ECO:0007669"/>
    <property type="project" value="TreeGrafter"/>
</dbReference>
<dbReference type="CDD" id="cd02196">
    <property type="entry name" value="PurM"/>
    <property type="match status" value="1"/>
</dbReference>
<dbReference type="FunFam" id="3.30.1330.10:FF:000001">
    <property type="entry name" value="Phosphoribosylformylglycinamidine cyclo-ligase"/>
    <property type="match status" value="1"/>
</dbReference>
<dbReference type="FunFam" id="3.90.650.10:FF:000011">
    <property type="entry name" value="Phosphoribosylformylglycinamidine cyclo-ligase"/>
    <property type="match status" value="1"/>
</dbReference>
<dbReference type="Gene3D" id="3.90.650.10">
    <property type="entry name" value="PurM-like C-terminal domain"/>
    <property type="match status" value="1"/>
</dbReference>
<dbReference type="Gene3D" id="3.30.1330.10">
    <property type="entry name" value="PurM-like, N-terminal domain"/>
    <property type="match status" value="1"/>
</dbReference>
<dbReference type="HAMAP" id="MF_00741">
    <property type="entry name" value="AIRS"/>
    <property type="match status" value="1"/>
</dbReference>
<dbReference type="InterPro" id="IPR010918">
    <property type="entry name" value="PurM-like_C_dom"/>
</dbReference>
<dbReference type="InterPro" id="IPR036676">
    <property type="entry name" value="PurM-like_C_sf"/>
</dbReference>
<dbReference type="InterPro" id="IPR016188">
    <property type="entry name" value="PurM-like_N"/>
</dbReference>
<dbReference type="InterPro" id="IPR036921">
    <property type="entry name" value="PurM-like_N_sf"/>
</dbReference>
<dbReference type="InterPro" id="IPR004733">
    <property type="entry name" value="PurM_cligase"/>
</dbReference>
<dbReference type="NCBIfam" id="TIGR00878">
    <property type="entry name" value="purM"/>
    <property type="match status" value="1"/>
</dbReference>
<dbReference type="PANTHER" id="PTHR10520:SF12">
    <property type="entry name" value="TRIFUNCTIONAL PURINE BIOSYNTHETIC PROTEIN ADENOSINE-3"/>
    <property type="match status" value="1"/>
</dbReference>
<dbReference type="PANTHER" id="PTHR10520">
    <property type="entry name" value="TRIFUNCTIONAL PURINE BIOSYNTHETIC PROTEIN ADENOSINE-3-RELATED"/>
    <property type="match status" value="1"/>
</dbReference>
<dbReference type="Pfam" id="PF00586">
    <property type="entry name" value="AIRS"/>
    <property type="match status" value="1"/>
</dbReference>
<dbReference type="Pfam" id="PF02769">
    <property type="entry name" value="AIRS_C"/>
    <property type="match status" value="1"/>
</dbReference>
<dbReference type="SUPFAM" id="SSF56042">
    <property type="entry name" value="PurM C-terminal domain-like"/>
    <property type="match status" value="1"/>
</dbReference>
<dbReference type="SUPFAM" id="SSF55326">
    <property type="entry name" value="PurM N-terminal domain-like"/>
    <property type="match status" value="1"/>
</dbReference>
<gene>
    <name evidence="1" type="primary">purM</name>
    <name type="ordered locus">SSA_0032</name>
</gene>
<evidence type="ECO:0000255" key="1">
    <source>
        <dbReference type="HAMAP-Rule" id="MF_00741"/>
    </source>
</evidence>
<feature type="chain" id="PRO_1000046477" description="Phosphoribosylformylglycinamidine cyclo-ligase">
    <location>
        <begin position="1"/>
        <end position="340"/>
    </location>
</feature>
<accession>A3CJZ4</accession>
<organism>
    <name type="scientific">Streptococcus sanguinis (strain SK36)</name>
    <dbReference type="NCBI Taxonomy" id="388919"/>
    <lineage>
        <taxon>Bacteria</taxon>
        <taxon>Bacillati</taxon>
        <taxon>Bacillota</taxon>
        <taxon>Bacilli</taxon>
        <taxon>Lactobacillales</taxon>
        <taxon>Streptococcaceae</taxon>
        <taxon>Streptococcus</taxon>
    </lineage>
</organism>
<keyword id="KW-0067">ATP-binding</keyword>
<keyword id="KW-0963">Cytoplasm</keyword>
<keyword id="KW-0436">Ligase</keyword>
<keyword id="KW-0547">Nucleotide-binding</keyword>
<keyword id="KW-0658">Purine biosynthesis</keyword>
<keyword id="KW-1185">Reference proteome</keyword>
<proteinExistence type="inferred from homology"/>
<protein>
    <recommendedName>
        <fullName evidence="1">Phosphoribosylformylglycinamidine cyclo-ligase</fullName>
        <ecNumber evidence="1">6.3.3.1</ecNumber>
    </recommendedName>
    <alternativeName>
        <fullName evidence="1">AIR synthase</fullName>
    </alternativeName>
    <alternativeName>
        <fullName evidence="1">AIRS</fullName>
    </alternativeName>
    <alternativeName>
        <fullName evidence="1">Phosphoribosyl-aminoimidazole synthetase</fullName>
    </alternativeName>
</protein>
<comment type="catalytic activity">
    <reaction evidence="1">
        <text>2-formamido-N(1)-(5-O-phospho-beta-D-ribosyl)acetamidine + ATP = 5-amino-1-(5-phospho-beta-D-ribosyl)imidazole + ADP + phosphate + H(+)</text>
        <dbReference type="Rhea" id="RHEA:23032"/>
        <dbReference type="ChEBI" id="CHEBI:15378"/>
        <dbReference type="ChEBI" id="CHEBI:30616"/>
        <dbReference type="ChEBI" id="CHEBI:43474"/>
        <dbReference type="ChEBI" id="CHEBI:137981"/>
        <dbReference type="ChEBI" id="CHEBI:147287"/>
        <dbReference type="ChEBI" id="CHEBI:456216"/>
        <dbReference type="EC" id="6.3.3.1"/>
    </reaction>
</comment>
<comment type="pathway">
    <text evidence="1">Purine metabolism; IMP biosynthesis via de novo pathway; 5-amino-1-(5-phospho-D-ribosyl)imidazole from N(2)-formyl-N(1)-(5-phospho-D-ribosyl)glycinamide: step 2/2.</text>
</comment>
<comment type="subcellular location">
    <subcellularLocation>
        <location evidence="1">Cytoplasm</location>
    </subcellularLocation>
</comment>
<comment type="similarity">
    <text evidence="1">Belongs to the AIR synthase family.</text>
</comment>
<sequence>MTNKNAYAQSGVDVEAGYEVVERIKKHVARTERAGVMGALGGFGGMFDLSQTGVKEPVLISGTDGVGTKLMLAIQYDKHDTIGQDCVAMCVNDIVAAGAEPLYFLDYIATGKNEPAKLEQVVAGVAEGCVQSGAALIGGETAEMPGMYGEDDYDLAGFAVGVAEKSEIIDGSKVAEGDVLLGLTSSGIHSNGYSLVRRVFADYTGEEVLPELEGKKLKEVLLEPTRIYVKALLPLIKEKLVHGIAHITGGGFIENVPRMFADDLAAEIEEDKIPVLPIFKALEKYGHIKHQEMFEIFNMGLGMILAVAPENVDRVKELLDEPVYEVGRIVKKENESVLIK</sequence>